<proteinExistence type="inferred from homology"/>
<feature type="chain" id="PRO_0000272748" description="Large ribosomal subunit protein uL23">
    <location>
        <begin position="1"/>
        <end position="99"/>
    </location>
</feature>
<reference key="1">
    <citation type="journal article" date="2005" name="Nat. Genet.">
        <title>The complete genome sequence of Francisella tularensis, the causative agent of tularemia.</title>
        <authorList>
            <person name="Larsson P."/>
            <person name="Oyston P.C.F."/>
            <person name="Chain P."/>
            <person name="Chu M.C."/>
            <person name="Duffield M."/>
            <person name="Fuxelius H.-H."/>
            <person name="Garcia E."/>
            <person name="Haelltorp G."/>
            <person name="Johansson D."/>
            <person name="Isherwood K.E."/>
            <person name="Karp P.D."/>
            <person name="Larsson E."/>
            <person name="Liu Y."/>
            <person name="Michell S."/>
            <person name="Prior J."/>
            <person name="Prior R."/>
            <person name="Malfatti S."/>
            <person name="Sjoestedt A."/>
            <person name="Svensson K."/>
            <person name="Thompson N."/>
            <person name="Vergez L."/>
            <person name="Wagg J.K."/>
            <person name="Wren B.W."/>
            <person name="Lindler L.E."/>
            <person name="Andersson S.G.E."/>
            <person name="Forsman M."/>
            <person name="Titball R.W."/>
        </authorList>
    </citation>
    <scope>NUCLEOTIDE SEQUENCE [LARGE SCALE GENOMIC DNA]</scope>
    <source>
        <strain>SCHU S4 / Schu 4</strain>
    </source>
</reference>
<accession>Q5NHW6</accession>
<dbReference type="EMBL" id="AJ749949">
    <property type="protein sequence ID" value="CAG44960.1"/>
    <property type="molecule type" value="Genomic_DNA"/>
</dbReference>
<dbReference type="RefSeq" id="WP_003021599.1">
    <property type="nucleotide sequence ID" value="NC_006570.2"/>
</dbReference>
<dbReference type="RefSeq" id="YP_169376.1">
    <property type="nucleotide sequence ID" value="NC_006570.2"/>
</dbReference>
<dbReference type="SMR" id="Q5NHW6"/>
<dbReference type="STRING" id="177416.FTT_0327"/>
<dbReference type="DNASU" id="3191999"/>
<dbReference type="EnsemblBacteria" id="CAG44960">
    <property type="protein sequence ID" value="CAG44960"/>
    <property type="gene ID" value="FTT_0327"/>
</dbReference>
<dbReference type="KEGG" id="ftu:FTT_0327"/>
<dbReference type="eggNOG" id="COG0089">
    <property type="taxonomic scope" value="Bacteria"/>
</dbReference>
<dbReference type="OrthoDB" id="9793353at2"/>
<dbReference type="Proteomes" id="UP000001174">
    <property type="component" value="Chromosome"/>
</dbReference>
<dbReference type="GO" id="GO:1990904">
    <property type="term" value="C:ribonucleoprotein complex"/>
    <property type="evidence" value="ECO:0007669"/>
    <property type="project" value="UniProtKB-KW"/>
</dbReference>
<dbReference type="GO" id="GO:0005840">
    <property type="term" value="C:ribosome"/>
    <property type="evidence" value="ECO:0007669"/>
    <property type="project" value="UniProtKB-KW"/>
</dbReference>
<dbReference type="GO" id="GO:0019843">
    <property type="term" value="F:rRNA binding"/>
    <property type="evidence" value="ECO:0007669"/>
    <property type="project" value="UniProtKB-UniRule"/>
</dbReference>
<dbReference type="GO" id="GO:0003735">
    <property type="term" value="F:structural constituent of ribosome"/>
    <property type="evidence" value="ECO:0007669"/>
    <property type="project" value="InterPro"/>
</dbReference>
<dbReference type="GO" id="GO:0006412">
    <property type="term" value="P:translation"/>
    <property type="evidence" value="ECO:0007669"/>
    <property type="project" value="UniProtKB-UniRule"/>
</dbReference>
<dbReference type="FunFam" id="3.30.70.330:FF:000001">
    <property type="entry name" value="50S ribosomal protein L23"/>
    <property type="match status" value="1"/>
</dbReference>
<dbReference type="Gene3D" id="3.30.70.330">
    <property type="match status" value="1"/>
</dbReference>
<dbReference type="HAMAP" id="MF_01369_B">
    <property type="entry name" value="Ribosomal_uL23_B"/>
    <property type="match status" value="1"/>
</dbReference>
<dbReference type="InterPro" id="IPR012677">
    <property type="entry name" value="Nucleotide-bd_a/b_plait_sf"/>
</dbReference>
<dbReference type="InterPro" id="IPR013025">
    <property type="entry name" value="Ribosomal_uL23-like"/>
</dbReference>
<dbReference type="InterPro" id="IPR012678">
    <property type="entry name" value="Ribosomal_uL23/eL15/eS24_sf"/>
</dbReference>
<dbReference type="InterPro" id="IPR001014">
    <property type="entry name" value="Ribosomal_uL23_CS"/>
</dbReference>
<dbReference type="NCBIfam" id="NF004359">
    <property type="entry name" value="PRK05738.1-3"/>
    <property type="match status" value="1"/>
</dbReference>
<dbReference type="NCBIfam" id="NF004363">
    <property type="entry name" value="PRK05738.2-4"/>
    <property type="match status" value="1"/>
</dbReference>
<dbReference type="PANTHER" id="PTHR11620">
    <property type="entry name" value="60S RIBOSOMAL PROTEIN L23A"/>
    <property type="match status" value="1"/>
</dbReference>
<dbReference type="Pfam" id="PF00276">
    <property type="entry name" value="Ribosomal_L23"/>
    <property type="match status" value="1"/>
</dbReference>
<dbReference type="SUPFAM" id="SSF54189">
    <property type="entry name" value="Ribosomal proteins S24e, L23 and L15e"/>
    <property type="match status" value="1"/>
</dbReference>
<dbReference type="PROSITE" id="PS00050">
    <property type="entry name" value="RIBOSOMAL_L23"/>
    <property type="match status" value="1"/>
</dbReference>
<keyword id="KW-1185">Reference proteome</keyword>
<keyword id="KW-0687">Ribonucleoprotein</keyword>
<keyword id="KW-0689">Ribosomal protein</keyword>
<keyword id="KW-0694">RNA-binding</keyword>
<keyword id="KW-0699">rRNA-binding</keyword>
<protein>
    <recommendedName>
        <fullName evidence="1">Large ribosomal subunit protein uL23</fullName>
    </recommendedName>
    <alternativeName>
        <fullName evidence="2">50S ribosomal protein L23</fullName>
    </alternativeName>
</protein>
<name>RL23_FRATT</name>
<gene>
    <name evidence="1" type="primary">rplW</name>
    <name type="ordered locus">FTT_0327</name>
</gene>
<organism>
    <name type="scientific">Francisella tularensis subsp. tularensis (strain SCHU S4 / Schu 4)</name>
    <dbReference type="NCBI Taxonomy" id="177416"/>
    <lineage>
        <taxon>Bacteria</taxon>
        <taxon>Pseudomonadati</taxon>
        <taxon>Pseudomonadota</taxon>
        <taxon>Gammaproteobacteria</taxon>
        <taxon>Thiotrichales</taxon>
        <taxon>Francisellaceae</taxon>
        <taxon>Francisella</taxon>
    </lineage>
</organism>
<sequence length="99" mass="11037">MSSQEKLLKTVIRPHVSDKTYGLSDANSTIVFEVARFANKQDVKNAVEKLFEVKVESVNILNVKGKARRFGRVEGGTKAWKKAYVKLAEGHDINFVGAE</sequence>
<comment type="function">
    <text evidence="1">One of the early assembly proteins it binds 23S rRNA. One of the proteins that surrounds the polypeptide exit tunnel on the outside of the ribosome. Forms the main docking site for trigger factor binding to the ribosome.</text>
</comment>
<comment type="subunit">
    <text evidence="1">Part of the 50S ribosomal subunit. Contacts protein L29, and trigger factor when it is bound to the ribosome.</text>
</comment>
<comment type="similarity">
    <text evidence="1">Belongs to the universal ribosomal protein uL23 family.</text>
</comment>
<evidence type="ECO:0000255" key="1">
    <source>
        <dbReference type="HAMAP-Rule" id="MF_01369"/>
    </source>
</evidence>
<evidence type="ECO:0000305" key="2"/>